<accession>Q6Q870</accession>
<organism>
    <name type="scientific">Leptosphaeria maculans</name>
    <name type="common">Blackleg fungus</name>
    <name type="synonym">Phoma lingam</name>
    <dbReference type="NCBI Taxonomy" id="5022"/>
    <lineage>
        <taxon>Eukaryota</taxon>
        <taxon>Fungi</taxon>
        <taxon>Dikarya</taxon>
        <taxon>Ascomycota</taxon>
        <taxon>Pezizomycotina</taxon>
        <taxon>Dothideomycetes</taxon>
        <taxon>Pleosporomycetidae</taxon>
        <taxon>Pleosporales</taxon>
        <taxon>Pleosporineae</taxon>
        <taxon>Leptosphaeriaceae</taxon>
        <taxon>Plenodomus</taxon>
        <taxon>Plenodomus lingam/Leptosphaeria maculans species complex</taxon>
    </lineage>
</organism>
<protein>
    <recommendedName>
        <fullName evidence="5">N-methyltransferase sirN</fullName>
        <ecNumber evidence="7">2.1.1.-</ecNumber>
    </recommendedName>
    <alternativeName>
        <fullName evidence="5">Sirodesmin biosynthesis protein N</fullName>
    </alternativeName>
</protein>
<feature type="chain" id="PRO_0000437730" description="N-methyltransferase sirN">
    <location>
        <begin position="1"/>
        <end position="284"/>
    </location>
</feature>
<name>SIRN_LEPMC</name>
<gene>
    <name evidence="5" type="primary">sirN</name>
</gene>
<proteinExistence type="inferred from homology"/>
<reference key="1">
    <citation type="journal article" date="2004" name="Mol. Microbiol.">
        <title>The sirodesmin biosynthetic gene cluster of the plant pathogenic fungus Leptosphaeria maculans.</title>
        <authorList>
            <person name="Gardiner D.M."/>
            <person name="Cozijnsen A.J."/>
            <person name="Wilson L.M."/>
            <person name="Pedras M.S."/>
            <person name="Howlett B.J."/>
        </authorList>
    </citation>
    <scope>NUCLEOTIDE SEQUENCE [GENOMIC DNA]</scope>
    <scope>FUNCTION</scope>
</reference>
<reference key="2">
    <citation type="journal article" date="2008" name="Mycol. Res.">
        <title>Biosynthetic gene clusters for epipolythiodioxopiperazines in filamentous fungi.</title>
        <authorList>
            <person name="Fox E.M."/>
            <person name="Howlett B.J."/>
        </authorList>
    </citation>
    <scope>FUNCTION</scope>
</reference>
<reference key="3">
    <citation type="journal article" date="2010" name="Microbiology">
        <title>A tyrosine O-prenyltransferase catalyses the first pathway-specific step in the biosynthesis of sirodesmin PL.</title>
        <authorList>
            <person name="Kremer A."/>
            <person name="Li S.M."/>
        </authorList>
    </citation>
    <scope>FUNCTION</scope>
</reference>
<reference key="4">
    <citation type="journal article" date="2011" name="Appl. Microbiol. Biotechnol.">
        <title>The tyrosine O-prenyltransferase SirD catalyzes O-, N-, and C-prenylations.</title>
        <authorList>
            <person name="Zou H.X."/>
            <person name="Xie X."/>
            <person name="Zheng X.D."/>
            <person name="Li S.M."/>
        </authorList>
    </citation>
    <scope>FUNCTION</scope>
</reference>
<reference key="5">
    <citation type="journal article" date="2013" name="ACS Chem. Biol.">
        <title>Tyrosine O-prenyltransferase SirD catalyzes S-, C-, and N-prenylations on tyrosine and tryptophan derivatives.</title>
        <authorList>
            <person name="Rudolf J.D."/>
            <person name="Poulter C.D."/>
        </authorList>
    </citation>
    <scope>FUNCTION</scope>
</reference>
<reference key="6">
    <citation type="journal article" date="2016" name="PLoS ONE">
        <title>The epipolythiodiketopiperazine gene cluster in Claviceps purpurea: dysfunctional cytochrome P450 enzyme prevents formation of the previously unknown clapurines.</title>
        <authorList>
            <person name="Dopstadt J."/>
            <person name="Neubauer L."/>
            <person name="Tudzynski P."/>
            <person name="Humpf H.U."/>
        </authorList>
    </citation>
    <scope>FUNCTION</scope>
</reference>
<comment type="function">
    <text evidence="1 2 3 4 7 8">N-methyltransferase; part of the gene cluster that mediates the biosynthesis of sirodesmin PL, an epipolythiodioxopiperazine (ETP) characterized by a disulfide bridged cyclic dipeptide and that acts as a phytotoxin which is involved in the blackleg didease of canola (PubMed:15387811, PubMed:18272357, PubMed:19762440). SirD catalyzes the O-prenylation of L-tyrosine (L-Tyr) in the presence of dimethylallyl diphosphate (DMAPP) to yield 4-O-dimethylallyl-L-Tyr, and therefore represents probably the first pathway-specific enzyme in the biosynthesis of sirodesmin PL (PubMed:19762440, PubMed:21038099, PubMed:24083562). 4-O-dimethylallyl-L-Tyr, then undergoes condensation with L-Ser in a reaction catalyzed by the non-ribosomal peptide synthase sirP to form the diketopiperazine (DKP) backbone (PubMed:18272357). Further bishydroxylation of the DKP performed by the cytochrome P450 monooxygenase sirC leads to the production of the intermediate phomamide (PubMed:27390873). This step is essential to form the reactive thiol group required for toxicity of sirodesmin PL (PubMed:27390873). The next steps of sirodesmin biosynthesis are not well understood yet but some predictions could be made from intermediate compounds identification (PubMed:18272357). Phomamide is converted into phomalizarine via oxidation, probably by sirT (PubMed:18272357). Further oxidation, methylation (by sirM or sirN) and reduction steps convert phomalizarine to deacetyl sirodesmin (PubMed:18272357). Finally, acetyltransferase sirH probably acetylates deacetyl sirodesmin to produce sirodesmin PL (PubMed:18272357).</text>
</comment>
<comment type="pathway">
    <text evidence="7">Mycotoxin biosynthesis.</text>
</comment>
<comment type="similarity">
    <text evidence="6">Belongs to the methyltransferase superfamily. LaeA methyltransferase family.</text>
</comment>
<comment type="sequence caution" evidence="6">
    <conflict type="erroneous gene model prediction">
        <sequence resource="EMBL-CDS" id="AAT01502"/>
    </conflict>
</comment>
<dbReference type="EC" id="2.1.1.-" evidence="7"/>
<dbReference type="EMBL" id="AY553235">
    <property type="protein sequence ID" value="AAT01502.1"/>
    <property type="status" value="ALT_SEQ"/>
    <property type="molecule type" value="Genomic_DNA"/>
</dbReference>
<dbReference type="SMR" id="Q6Q870"/>
<dbReference type="GO" id="GO:0008168">
    <property type="term" value="F:methyltransferase activity"/>
    <property type="evidence" value="ECO:0007669"/>
    <property type="project" value="UniProtKB-KW"/>
</dbReference>
<dbReference type="GO" id="GO:0032259">
    <property type="term" value="P:methylation"/>
    <property type="evidence" value="ECO:0007669"/>
    <property type="project" value="UniProtKB-KW"/>
</dbReference>
<dbReference type="Gene3D" id="3.40.50.150">
    <property type="entry name" value="Vaccinia Virus protein VP39"/>
    <property type="match status" value="1"/>
</dbReference>
<dbReference type="InterPro" id="IPR029063">
    <property type="entry name" value="SAM-dependent_MTases_sf"/>
</dbReference>
<dbReference type="SUPFAM" id="SSF53335">
    <property type="entry name" value="S-adenosyl-L-methionine-dependent methyltransferases"/>
    <property type="match status" value="1"/>
</dbReference>
<sequence length="284" mass="31514">MTVETKDLPESNYLLDYDDTEKRRLREQHDLIKAYTGKLILAPLDLTKPNLKILDSGTFDGHWLTEAAKPLTTPLLTGTDISPAAFPNPPPQNTSFHIQSITDPWPASWQNTFDLVHQRLVLAGTTPTGGLDAVRNLAGLAKPGGWVQLIEGKLLAESQRTRFPALHRFHSFIERMLPGFGWNIRAGLMVGGWLGEVGLEEVGEMEVEIPVGRANGDGRLGAMAEKNLRDVMGVWRQASSKLPADSPFKASELEEIFVDWDKEIETIGSLLRFAVVWGRRPALD</sequence>
<evidence type="ECO:0000269" key="1">
    <source>
    </source>
</evidence>
<evidence type="ECO:0000269" key="2">
    <source>
    </source>
</evidence>
<evidence type="ECO:0000269" key="3">
    <source>
    </source>
</evidence>
<evidence type="ECO:0000269" key="4">
    <source>
    </source>
</evidence>
<evidence type="ECO:0000303" key="5">
    <source>
    </source>
</evidence>
<evidence type="ECO:0000305" key="6"/>
<evidence type="ECO:0000305" key="7">
    <source>
    </source>
</evidence>
<evidence type="ECO:0000305" key="8">
    <source>
    </source>
</evidence>
<keyword id="KW-0489">Methyltransferase</keyword>
<keyword id="KW-0949">S-adenosyl-L-methionine</keyword>
<keyword id="KW-0808">Transferase</keyword>
<keyword id="KW-0843">Virulence</keyword>